<feature type="chain" id="PRO_1000046299" description="Formimidoylglutamase">
    <location>
        <begin position="1"/>
        <end position="318"/>
    </location>
</feature>
<feature type="binding site" evidence="1">
    <location>
        <position position="130"/>
    </location>
    <ligand>
        <name>Mn(2+)</name>
        <dbReference type="ChEBI" id="CHEBI:29035"/>
        <label>1</label>
    </ligand>
</feature>
<feature type="binding site" evidence="1">
    <location>
        <position position="155"/>
    </location>
    <ligand>
        <name>Mn(2+)</name>
        <dbReference type="ChEBI" id="CHEBI:29035"/>
        <label>1</label>
    </ligand>
</feature>
<feature type="binding site" evidence="1">
    <location>
        <position position="155"/>
    </location>
    <ligand>
        <name>Mn(2+)</name>
        <dbReference type="ChEBI" id="CHEBI:29035"/>
        <label>2</label>
    </ligand>
</feature>
<feature type="binding site" evidence="1">
    <location>
        <position position="157"/>
    </location>
    <ligand>
        <name>Mn(2+)</name>
        <dbReference type="ChEBI" id="CHEBI:29035"/>
        <label>2</label>
    </ligand>
</feature>
<feature type="binding site" evidence="1">
    <location>
        <position position="159"/>
    </location>
    <ligand>
        <name>Mn(2+)</name>
        <dbReference type="ChEBI" id="CHEBI:29035"/>
        <label>1</label>
    </ligand>
</feature>
<feature type="binding site" evidence="1">
    <location>
        <position position="246"/>
    </location>
    <ligand>
        <name>Mn(2+)</name>
        <dbReference type="ChEBI" id="CHEBI:29035"/>
        <label>1</label>
    </ligand>
</feature>
<feature type="binding site" evidence="1">
    <location>
        <position position="246"/>
    </location>
    <ligand>
        <name>Mn(2+)</name>
        <dbReference type="ChEBI" id="CHEBI:29035"/>
        <label>2</label>
    </ligand>
</feature>
<feature type="binding site" evidence="1">
    <location>
        <position position="248"/>
    </location>
    <ligand>
        <name>Mn(2+)</name>
        <dbReference type="ChEBI" id="CHEBI:29035"/>
        <label>2</label>
    </ligand>
</feature>
<reference key="1">
    <citation type="submission" date="2006-09" db="EMBL/GenBank/DDBJ databases">
        <authorList>
            <consortium name="The Klebsiella pneumonia Genome Sequencing Project"/>
            <person name="McClelland M."/>
            <person name="Sanderson E.K."/>
            <person name="Spieth J."/>
            <person name="Clifton W.S."/>
            <person name="Latreille P."/>
            <person name="Sabo A."/>
            <person name="Pepin K."/>
            <person name="Bhonagiri V."/>
            <person name="Porwollik S."/>
            <person name="Ali J."/>
            <person name="Wilson R.K."/>
        </authorList>
    </citation>
    <scope>NUCLEOTIDE SEQUENCE [LARGE SCALE GENOMIC DNA]</scope>
    <source>
        <strain>ATCC 700721 / MGH 78578</strain>
    </source>
</reference>
<proteinExistence type="inferred from homology"/>
<sequence>MMLWQATPASLWQGRDDSAEAPNALRLFQTIVRAERFAPQEMPGDIALLGFACDEGVRRNKGRTGAADGPATLRRALANMASHQGHDRCVDMGTISVDGEQLEAAHQALREAVADCQRVGKRTLVLGGGHETAFGHGAGVLDAFPGEKVGIINLDAHLDLRFADCASSGTPFRQLALECDAQQRGFHYTCIGVSRAANTQALWDEAARRQVAIVEDLEVLTAFETRVLPELERNIAQFDRLYLTIDLDVLPAREMPAVSAPAALGVPLATLLRIVEPLCRNGKLQAVDLVEFNPLFDIDGQGARAAARLAWQIAHWWR</sequence>
<name>HUTG_KLEP7</name>
<accession>A6T6K8</accession>
<comment type="function">
    <text evidence="1">Catalyzes the conversion of N-formimidoyl-L-glutamate to L-glutamate and formamide.</text>
</comment>
<comment type="catalytic activity">
    <reaction evidence="1">
        <text>N-formimidoyl-L-glutamate + H2O = formamide + L-glutamate</text>
        <dbReference type="Rhea" id="RHEA:22492"/>
        <dbReference type="ChEBI" id="CHEBI:15377"/>
        <dbReference type="ChEBI" id="CHEBI:16397"/>
        <dbReference type="ChEBI" id="CHEBI:29985"/>
        <dbReference type="ChEBI" id="CHEBI:58928"/>
        <dbReference type="EC" id="3.5.3.8"/>
    </reaction>
</comment>
<comment type="cofactor">
    <cofactor evidence="1">
        <name>Mn(2+)</name>
        <dbReference type="ChEBI" id="CHEBI:29035"/>
    </cofactor>
    <text evidence="1">Binds 2 manganese ions per subunit.</text>
</comment>
<comment type="pathway">
    <text evidence="1">Amino-acid degradation; L-histidine degradation into L-glutamate; L-glutamate from N-formimidoyl-L-glutamate (hydrolase route): step 1/1.</text>
</comment>
<comment type="similarity">
    <text evidence="1">Belongs to the arginase family.</text>
</comment>
<gene>
    <name evidence="1" type="primary">hutG</name>
    <name type="ordered locus">KPN78578_07680</name>
    <name type="ORF">KPN_00793</name>
</gene>
<protein>
    <recommendedName>
        <fullName evidence="1">Formimidoylglutamase</fullName>
        <ecNumber evidence="1">3.5.3.8</ecNumber>
    </recommendedName>
    <alternativeName>
        <fullName evidence="1">Formiminoglutamase</fullName>
    </alternativeName>
    <alternativeName>
        <fullName evidence="1">Formiminoglutamate hydrolase</fullName>
    </alternativeName>
</protein>
<organism>
    <name type="scientific">Klebsiella pneumoniae subsp. pneumoniae (strain ATCC 700721 / MGH 78578)</name>
    <dbReference type="NCBI Taxonomy" id="272620"/>
    <lineage>
        <taxon>Bacteria</taxon>
        <taxon>Pseudomonadati</taxon>
        <taxon>Pseudomonadota</taxon>
        <taxon>Gammaproteobacteria</taxon>
        <taxon>Enterobacterales</taxon>
        <taxon>Enterobacteriaceae</taxon>
        <taxon>Klebsiella/Raoultella group</taxon>
        <taxon>Klebsiella</taxon>
        <taxon>Klebsiella pneumoniae complex</taxon>
    </lineage>
</organism>
<dbReference type="EC" id="3.5.3.8" evidence="1"/>
<dbReference type="EMBL" id="CP000647">
    <property type="protein sequence ID" value="ABR76229.1"/>
    <property type="molecule type" value="Genomic_DNA"/>
</dbReference>
<dbReference type="RefSeq" id="WP_004151698.1">
    <property type="nucleotide sequence ID" value="NC_009648.1"/>
</dbReference>
<dbReference type="SMR" id="A6T6K8"/>
<dbReference type="STRING" id="272620.KPN_00793"/>
<dbReference type="PaxDb" id="272620-KPN_00793"/>
<dbReference type="EnsemblBacteria" id="ABR76229">
    <property type="protein sequence ID" value="ABR76229"/>
    <property type="gene ID" value="KPN_00793"/>
</dbReference>
<dbReference type="KEGG" id="kpn:KPN_00793"/>
<dbReference type="HOGENOM" id="CLU_039478_2_0_6"/>
<dbReference type="UniPathway" id="UPA00379">
    <property type="reaction ID" value="UER00552"/>
</dbReference>
<dbReference type="Proteomes" id="UP000000265">
    <property type="component" value="Chromosome"/>
</dbReference>
<dbReference type="GO" id="GO:0008783">
    <property type="term" value="F:agmatinase activity"/>
    <property type="evidence" value="ECO:0007669"/>
    <property type="project" value="TreeGrafter"/>
</dbReference>
<dbReference type="GO" id="GO:0050415">
    <property type="term" value="F:formimidoylglutamase activity"/>
    <property type="evidence" value="ECO:0007669"/>
    <property type="project" value="UniProtKB-UniRule"/>
</dbReference>
<dbReference type="GO" id="GO:0030145">
    <property type="term" value="F:manganese ion binding"/>
    <property type="evidence" value="ECO:0007669"/>
    <property type="project" value="UniProtKB-UniRule"/>
</dbReference>
<dbReference type="GO" id="GO:0019556">
    <property type="term" value="P:L-histidine catabolic process to glutamate and formamide"/>
    <property type="evidence" value="ECO:0007669"/>
    <property type="project" value="UniProtKB-UniPathway"/>
</dbReference>
<dbReference type="GO" id="GO:0019557">
    <property type="term" value="P:L-histidine catabolic process to glutamate and formate"/>
    <property type="evidence" value="ECO:0007669"/>
    <property type="project" value="UniProtKB-UniPathway"/>
</dbReference>
<dbReference type="GO" id="GO:0033389">
    <property type="term" value="P:putrescine biosynthetic process from arginine, via agmatine"/>
    <property type="evidence" value="ECO:0007669"/>
    <property type="project" value="TreeGrafter"/>
</dbReference>
<dbReference type="CDD" id="cd09988">
    <property type="entry name" value="Formimidoylglutamase"/>
    <property type="match status" value="1"/>
</dbReference>
<dbReference type="Gene3D" id="3.40.800.10">
    <property type="entry name" value="Ureohydrolase domain"/>
    <property type="match status" value="1"/>
</dbReference>
<dbReference type="HAMAP" id="MF_00737">
    <property type="entry name" value="Formimidoylglutam"/>
    <property type="match status" value="1"/>
</dbReference>
<dbReference type="InterPro" id="IPR005923">
    <property type="entry name" value="HutG"/>
</dbReference>
<dbReference type="InterPro" id="IPR006035">
    <property type="entry name" value="Ureohydrolase"/>
</dbReference>
<dbReference type="InterPro" id="IPR023696">
    <property type="entry name" value="Ureohydrolase_dom_sf"/>
</dbReference>
<dbReference type="InterPro" id="IPR020855">
    <property type="entry name" value="Ureohydrolase_Mn_BS"/>
</dbReference>
<dbReference type="NCBIfam" id="TIGR01227">
    <property type="entry name" value="hutG"/>
    <property type="match status" value="1"/>
</dbReference>
<dbReference type="PANTHER" id="PTHR11358">
    <property type="entry name" value="ARGINASE/AGMATINASE"/>
    <property type="match status" value="1"/>
</dbReference>
<dbReference type="PANTHER" id="PTHR11358:SF35">
    <property type="entry name" value="FORMIMIDOYLGLUTAMASE"/>
    <property type="match status" value="1"/>
</dbReference>
<dbReference type="Pfam" id="PF00491">
    <property type="entry name" value="Arginase"/>
    <property type="match status" value="1"/>
</dbReference>
<dbReference type="PIRSF" id="PIRSF036979">
    <property type="entry name" value="Arginase"/>
    <property type="match status" value="1"/>
</dbReference>
<dbReference type="PRINTS" id="PR00116">
    <property type="entry name" value="ARGINASE"/>
</dbReference>
<dbReference type="SUPFAM" id="SSF52768">
    <property type="entry name" value="Arginase/deacetylase"/>
    <property type="match status" value="1"/>
</dbReference>
<dbReference type="PROSITE" id="PS01053">
    <property type="entry name" value="ARGINASE_1"/>
    <property type="match status" value="1"/>
</dbReference>
<dbReference type="PROSITE" id="PS51409">
    <property type="entry name" value="ARGINASE_2"/>
    <property type="match status" value="1"/>
</dbReference>
<evidence type="ECO:0000255" key="1">
    <source>
        <dbReference type="HAMAP-Rule" id="MF_00737"/>
    </source>
</evidence>
<keyword id="KW-0369">Histidine metabolism</keyword>
<keyword id="KW-0378">Hydrolase</keyword>
<keyword id="KW-0464">Manganese</keyword>
<keyword id="KW-0479">Metal-binding</keyword>